<proteinExistence type="predicted"/>
<accession>Q82Z76</accession>
<evidence type="ECO:0000255" key="1">
    <source>
        <dbReference type="PROSITE-ProRule" id="PRU00112"/>
    </source>
</evidence>
<evidence type="ECO:0000255" key="2">
    <source>
        <dbReference type="PROSITE-ProRule" id="PRU00169"/>
    </source>
</evidence>
<evidence type="ECO:0000305" key="3"/>
<dbReference type="EMBL" id="AE016830">
    <property type="protein sequence ID" value="AAO82868.1"/>
    <property type="molecule type" value="Genomic_DNA"/>
</dbReference>
<dbReference type="RefSeq" id="NP_816798.1">
    <property type="nucleotide sequence ID" value="NC_004668.1"/>
</dbReference>
<dbReference type="RefSeq" id="WP_002367483.1">
    <property type="nucleotide sequence ID" value="NZ_KE136524.1"/>
</dbReference>
<dbReference type="SMR" id="Q82Z76"/>
<dbReference type="STRING" id="226185.EF_3196"/>
<dbReference type="EnsemblBacteria" id="AAO82868">
    <property type="protein sequence ID" value="AAO82868"/>
    <property type="gene ID" value="EF_3196"/>
</dbReference>
<dbReference type="KEGG" id="efa:EF3196"/>
<dbReference type="PATRIC" id="fig|226185.45.peg.384"/>
<dbReference type="eggNOG" id="COG3279">
    <property type="taxonomic scope" value="Bacteria"/>
</dbReference>
<dbReference type="HOGENOM" id="CLU_000445_14_1_9"/>
<dbReference type="Proteomes" id="UP000001415">
    <property type="component" value="Chromosome"/>
</dbReference>
<dbReference type="GO" id="GO:0005737">
    <property type="term" value="C:cytoplasm"/>
    <property type="evidence" value="ECO:0007669"/>
    <property type="project" value="UniProtKB-SubCell"/>
</dbReference>
<dbReference type="GO" id="GO:0003677">
    <property type="term" value="F:DNA binding"/>
    <property type="evidence" value="ECO:0007669"/>
    <property type="project" value="UniProtKB-KW"/>
</dbReference>
<dbReference type="GO" id="GO:0000156">
    <property type="term" value="F:phosphorelay response regulator activity"/>
    <property type="evidence" value="ECO:0007669"/>
    <property type="project" value="InterPro"/>
</dbReference>
<dbReference type="CDD" id="cd17532">
    <property type="entry name" value="REC_LytTR_AlgR-like"/>
    <property type="match status" value="1"/>
</dbReference>
<dbReference type="Gene3D" id="2.20.25.10">
    <property type="match status" value="1"/>
</dbReference>
<dbReference type="Gene3D" id="2.40.50.40">
    <property type="match status" value="1"/>
</dbReference>
<dbReference type="Gene3D" id="3.40.50.2300">
    <property type="match status" value="1"/>
</dbReference>
<dbReference type="InterPro" id="IPR011006">
    <property type="entry name" value="CheY-like_superfamily"/>
</dbReference>
<dbReference type="InterPro" id="IPR046947">
    <property type="entry name" value="LytR-like"/>
</dbReference>
<dbReference type="InterPro" id="IPR007492">
    <property type="entry name" value="LytTR_DNA-bd_dom"/>
</dbReference>
<dbReference type="InterPro" id="IPR001789">
    <property type="entry name" value="Sig_transdc_resp-reg_receiver"/>
</dbReference>
<dbReference type="PANTHER" id="PTHR37299:SF1">
    <property type="entry name" value="STAGE 0 SPORULATION PROTEIN A HOMOLOG"/>
    <property type="match status" value="1"/>
</dbReference>
<dbReference type="PANTHER" id="PTHR37299">
    <property type="entry name" value="TRANSCRIPTIONAL REGULATOR-RELATED"/>
    <property type="match status" value="1"/>
</dbReference>
<dbReference type="Pfam" id="PF04397">
    <property type="entry name" value="LytTR"/>
    <property type="match status" value="1"/>
</dbReference>
<dbReference type="Pfam" id="PF00072">
    <property type="entry name" value="Response_reg"/>
    <property type="match status" value="1"/>
</dbReference>
<dbReference type="SMART" id="SM00850">
    <property type="entry name" value="LytTR"/>
    <property type="match status" value="1"/>
</dbReference>
<dbReference type="SMART" id="SM00448">
    <property type="entry name" value="REC"/>
    <property type="match status" value="1"/>
</dbReference>
<dbReference type="SUPFAM" id="SSF52172">
    <property type="entry name" value="CheY-like"/>
    <property type="match status" value="1"/>
</dbReference>
<dbReference type="PROSITE" id="PS50930">
    <property type="entry name" value="HTH_LYTTR"/>
    <property type="match status" value="1"/>
</dbReference>
<dbReference type="PROSITE" id="PS50110">
    <property type="entry name" value="RESPONSE_REGULATORY"/>
    <property type="match status" value="1"/>
</dbReference>
<gene>
    <name type="primary">lytT</name>
    <name type="ordered locus">EF_3196</name>
</gene>
<keyword id="KW-0963">Cytoplasm</keyword>
<keyword id="KW-0238">DNA-binding</keyword>
<keyword id="KW-0597">Phosphoprotein</keyword>
<keyword id="KW-1185">Reference proteome</keyword>
<keyword id="KW-0804">Transcription</keyword>
<keyword id="KW-0805">Transcription regulation</keyword>
<keyword id="KW-0902">Two-component regulatory system</keyword>
<comment type="function">
    <text>Member of the two-component regulatory system LytS/LytT that probably regulates genes involved in cell wall metabolism.</text>
</comment>
<comment type="subcellular location">
    <subcellularLocation>
        <location evidence="3">Cytoplasm</location>
    </subcellularLocation>
</comment>
<comment type="PTM">
    <text evidence="3">Phosphorylated by LytS.</text>
</comment>
<reference key="1">
    <citation type="journal article" date="2003" name="Science">
        <title>Role of mobile DNA in the evolution of vancomycin-resistant Enterococcus faecalis.</title>
        <authorList>
            <person name="Paulsen I.T."/>
            <person name="Banerjei L."/>
            <person name="Myers G.S.A."/>
            <person name="Nelson K.E."/>
            <person name="Seshadri R."/>
            <person name="Read T.D."/>
            <person name="Fouts D.E."/>
            <person name="Eisen J.A."/>
            <person name="Gill S.R."/>
            <person name="Heidelberg J.F."/>
            <person name="Tettelin H."/>
            <person name="Dodson R.J."/>
            <person name="Umayam L.A."/>
            <person name="Brinkac L.M."/>
            <person name="Beanan M.J."/>
            <person name="Daugherty S.C."/>
            <person name="DeBoy R.T."/>
            <person name="Durkin S.A."/>
            <person name="Kolonay J.F."/>
            <person name="Madupu R."/>
            <person name="Nelson W.C."/>
            <person name="Vamathevan J.J."/>
            <person name="Tran B."/>
            <person name="Upton J."/>
            <person name="Hansen T."/>
            <person name="Shetty J."/>
            <person name="Khouri H.M."/>
            <person name="Utterback T.R."/>
            <person name="Radune D."/>
            <person name="Ketchum K.A."/>
            <person name="Dougherty B.A."/>
            <person name="Fraser C.M."/>
        </authorList>
    </citation>
    <scope>NUCLEOTIDE SEQUENCE [LARGE SCALE GENOMIC DNA]</scope>
    <source>
        <strain>ATCC 700802 / V583</strain>
    </source>
</reference>
<protein>
    <recommendedName>
        <fullName>Sensory transduction protein LytT</fullName>
    </recommendedName>
</protein>
<sequence>MHVLIVDDEPLAREELSYLVSQHPQVTSVAEADSVAEAMEEMMDQKPDLLFLDIHLTDESGFDLAEKLTHLKKAPYLVFATAYDQYALKAFQVNAKDYILKPFEEEKITQVIEKASKEMGQAVPENTAEKGPKSEAIPIQGEDRIYLVAPEDIYLVSVEERQLSIFVDQQVYKMTGTLNSIEQKLPATLFIKTHRSFILNRTKIQEIQPWFNNTLQVILTNGSKVPVSRSYVKEFKEKLGLS</sequence>
<organism>
    <name type="scientific">Enterococcus faecalis (strain ATCC 700802 / V583)</name>
    <dbReference type="NCBI Taxonomy" id="226185"/>
    <lineage>
        <taxon>Bacteria</taxon>
        <taxon>Bacillati</taxon>
        <taxon>Bacillota</taxon>
        <taxon>Bacilli</taxon>
        <taxon>Lactobacillales</taxon>
        <taxon>Enterococcaceae</taxon>
        <taxon>Enterococcus</taxon>
    </lineage>
</organism>
<name>LYTT_ENTFA</name>
<feature type="chain" id="PRO_0000081124" description="Sensory transduction protein LytT">
    <location>
        <begin position="1"/>
        <end position="242"/>
    </location>
</feature>
<feature type="domain" description="Response regulatory" evidence="2">
    <location>
        <begin position="2"/>
        <end position="116"/>
    </location>
</feature>
<feature type="domain" description="HTH LytTR-type" evidence="1">
    <location>
        <begin position="137"/>
        <end position="241"/>
    </location>
</feature>